<proteinExistence type="evidence at protein level"/>
<sequence>MRSVTNAFGNSGELNDQVDETGYRKFDIHEGILFCIELSETMFKESSDLEYKSPLLEILESLDELMSQLVITRPGTAIGCYFYYCNREDAKEGIYELFPLRDINATFMKKLNDLLEDLSSGRISLYDYFMFQQTGSEKQVRLSVLFTFMLDTFLEEIPGQKQLSNKRVFLFTDIDKPQEAQDIDERARLRRLTIDLFDNKVNFATFFIGYADKPFDNEFYSDILQLGSHTNENTGLDSEFDGPSTKPIDAKYIKSRILRKKEVKRIMFQCPLILDEKTNFIVGVKGYTMYTHEKAGVRYKLVYEHEDIRQEAYSKRKFLNPITGEDVTGKTVKVYPYGDLDINLSDSQDQIVMEAYTQKDAFLKIIGFRSSSKSIHYFNNIDKSSFIVPDEAKYEGSIRTLASLLKILRKKDKIAILWGKLKSNSHPSLYTLSPSSVKDYNEGFYLYRVPFLDEIRKFPSLLSYDDGSEHKLDYDNMKKVTQSIMGYFNLRDGYNPSDFKNPLLQKHYKVLHDYLLQIETTFDENETPNTKKDRMMREDDSLRKLYYIRNKILESEKSEDPIIQRLNKYVKIWNMFYKKFNDDNISIKEEKKPFDKKPKFNI</sequence>
<accession>P32807</accession>
<accession>D6W0B1</accession>
<accession>P32498</accession>
<accession>Q0P778</accession>
<accession>Q0P779</accession>
<accession>Q0P787</accession>
<accession>Q0P789</accession>
<accession>Q6B267</accession>
<evidence type="ECO:0000269" key="1">
    <source>
    </source>
</evidence>
<evidence type="ECO:0000269" key="2">
    <source>
    </source>
</evidence>
<evidence type="ECO:0000269" key="3">
    <source>
    </source>
</evidence>
<evidence type="ECO:0000269" key="4">
    <source>
    </source>
</evidence>
<evidence type="ECO:0000269" key="5">
    <source>
    </source>
</evidence>
<evidence type="ECO:0000269" key="6">
    <source>
    </source>
</evidence>
<evidence type="ECO:0000269" key="7">
    <source>
    </source>
</evidence>
<evidence type="ECO:0000269" key="8">
    <source>
    </source>
</evidence>
<evidence type="ECO:0000269" key="9">
    <source>
    </source>
</evidence>
<evidence type="ECO:0000269" key="10">
    <source>
    </source>
</evidence>
<evidence type="ECO:0000269" key="11">
    <source>
    </source>
</evidence>
<evidence type="ECO:0000269" key="12">
    <source>
    </source>
</evidence>
<evidence type="ECO:0000269" key="13">
    <source>
    </source>
</evidence>
<evidence type="ECO:0000269" key="14">
    <source>
    </source>
</evidence>
<evidence type="ECO:0000305" key="15"/>
<evidence type="ECO:0007744" key="16">
    <source>
    </source>
</evidence>
<evidence type="ECO:0007829" key="17">
    <source>
        <dbReference type="PDB" id="5Y58"/>
    </source>
</evidence>
<dbReference type="EC" id="3.6.4.12"/>
<dbReference type="EMBL" id="X70379">
    <property type="protein sequence ID" value="CAA49840.1"/>
    <property type="molecule type" value="Genomic_DNA"/>
</dbReference>
<dbReference type="EMBL" id="D15052">
    <property type="protein sequence ID" value="BAA03648.1"/>
    <property type="molecule type" value="Genomic_DNA"/>
</dbReference>
<dbReference type="EMBL" id="AM296304">
    <property type="protein sequence ID" value="CAL36013.1"/>
    <property type="molecule type" value="Genomic_DNA"/>
</dbReference>
<dbReference type="EMBL" id="AM296302">
    <property type="protein sequence ID" value="CAL36015.1"/>
    <property type="molecule type" value="Genomic_DNA"/>
</dbReference>
<dbReference type="EMBL" id="AM296301">
    <property type="protein sequence ID" value="CAL36016.1"/>
    <property type="molecule type" value="Genomic_DNA"/>
</dbReference>
<dbReference type="EMBL" id="AM296299">
    <property type="protein sequence ID" value="CAL36018.1"/>
    <property type="molecule type" value="Genomic_DNA"/>
</dbReference>
<dbReference type="EMBL" id="AM296298">
    <property type="protein sequence ID" value="CAL36019.1"/>
    <property type="molecule type" value="Genomic_DNA"/>
</dbReference>
<dbReference type="EMBL" id="AM296297">
    <property type="protein sequence ID" value="CAL36020.1"/>
    <property type="molecule type" value="Genomic_DNA"/>
</dbReference>
<dbReference type="EMBL" id="AM296296">
    <property type="protein sequence ID" value="CAL36021.1"/>
    <property type="molecule type" value="Genomic_DNA"/>
</dbReference>
<dbReference type="EMBL" id="AM296294">
    <property type="protein sequence ID" value="CAL36023.1"/>
    <property type="molecule type" value="Genomic_DNA"/>
</dbReference>
<dbReference type="EMBL" id="AM296292">
    <property type="protein sequence ID" value="CAL36025.1"/>
    <property type="molecule type" value="Genomic_DNA"/>
</dbReference>
<dbReference type="EMBL" id="AM296295">
    <property type="protein sequence ID" value="CAL36022.1"/>
    <property type="molecule type" value="Genomic_DNA"/>
</dbReference>
<dbReference type="EMBL" id="AM296303">
    <property type="protein sequence ID" value="CAL36014.1"/>
    <property type="molecule type" value="Genomic_DNA"/>
</dbReference>
<dbReference type="EMBL" id="AM296293">
    <property type="protein sequence ID" value="CAL36024.1"/>
    <property type="molecule type" value="Genomic_DNA"/>
</dbReference>
<dbReference type="EMBL" id="Z49704">
    <property type="protein sequence ID" value="CAA89782.1"/>
    <property type="molecule type" value="Genomic_DNA"/>
</dbReference>
<dbReference type="EMBL" id="AY692863">
    <property type="protein sequence ID" value="AAT92882.1"/>
    <property type="molecule type" value="Genomic_DNA"/>
</dbReference>
<dbReference type="EMBL" id="BK006946">
    <property type="protein sequence ID" value="DAA10185.1"/>
    <property type="molecule type" value="Genomic_DNA"/>
</dbReference>
<dbReference type="PIR" id="S54591">
    <property type="entry name" value="S54591"/>
</dbReference>
<dbReference type="RefSeq" id="NP_014011.1">
    <property type="nucleotide sequence ID" value="NM_001182791.1"/>
</dbReference>
<dbReference type="PDB" id="5Y58">
    <property type="method" value="X-ray"/>
    <property type="resolution" value="2.80 A"/>
    <property type="chains" value="A/C/E=28-602"/>
</dbReference>
<dbReference type="PDBsum" id="5Y58"/>
<dbReference type="SMR" id="P32807"/>
<dbReference type="BioGRID" id="35464">
    <property type="interactions" value="389"/>
</dbReference>
<dbReference type="ComplexPortal" id="CPX-1732">
    <property type="entry name" value="Ku70:Ku80 complex"/>
</dbReference>
<dbReference type="DIP" id="DIP-2483N"/>
<dbReference type="FunCoup" id="P32807">
    <property type="interactions" value="795"/>
</dbReference>
<dbReference type="IntAct" id="P32807">
    <property type="interactions" value="28"/>
</dbReference>
<dbReference type="MINT" id="P32807"/>
<dbReference type="STRING" id="4932.YMR284W"/>
<dbReference type="iPTMnet" id="P32807"/>
<dbReference type="PaxDb" id="4932-YMR284W"/>
<dbReference type="PeptideAtlas" id="P32807"/>
<dbReference type="EnsemblFungi" id="YMR284W_mRNA">
    <property type="protein sequence ID" value="YMR284W"/>
    <property type="gene ID" value="YMR284W"/>
</dbReference>
<dbReference type="GeneID" id="855328"/>
<dbReference type="KEGG" id="sce:YMR284W"/>
<dbReference type="AGR" id="SGD:S000004897"/>
<dbReference type="SGD" id="S000004897">
    <property type="gene designation" value="YKU70"/>
</dbReference>
<dbReference type="VEuPathDB" id="FungiDB:YMR284W"/>
<dbReference type="eggNOG" id="KOG2327">
    <property type="taxonomic scope" value="Eukaryota"/>
</dbReference>
<dbReference type="GeneTree" id="ENSGT00940000153239"/>
<dbReference type="HOGENOM" id="CLU_024202_0_0_1"/>
<dbReference type="InParanoid" id="P32807"/>
<dbReference type="OMA" id="FWANVKH"/>
<dbReference type="OrthoDB" id="3249161at2759"/>
<dbReference type="BioCyc" id="YEAST:G3O-32954-MONOMER"/>
<dbReference type="Reactome" id="R-SCE-6798695">
    <property type="pathway name" value="Neutrophil degranulation"/>
</dbReference>
<dbReference type="BioGRID-ORCS" id="855328">
    <property type="hits" value="0 hits in 10 CRISPR screens"/>
</dbReference>
<dbReference type="PRO" id="PR:P32807"/>
<dbReference type="Proteomes" id="UP000002311">
    <property type="component" value="Chromosome XIII"/>
</dbReference>
<dbReference type="RNAct" id="P32807">
    <property type="molecule type" value="protein"/>
</dbReference>
<dbReference type="GO" id="GO:0000781">
    <property type="term" value="C:chromosome, telomeric region"/>
    <property type="evidence" value="ECO:0007669"/>
    <property type="project" value="UniProtKB-SubCell"/>
</dbReference>
<dbReference type="GO" id="GO:0043564">
    <property type="term" value="C:Ku70:Ku80 complex"/>
    <property type="evidence" value="ECO:0000314"/>
    <property type="project" value="SGD"/>
</dbReference>
<dbReference type="GO" id="GO:0005635">
    <property type="term" value="C:nuclear envelope"/>
    <property type="evidence" value="ECO:0000314"/>
    <property type="project" value="SGD"/>
</dbReference>
<dbReference type="GO" id="GO:0005524">
    <property type="term" value="F:ATP binding"/>
    <property type="evidence" value="ECO:0007669"/>
    <property type="project" value="UniProtKB-KW"/>
</dbReference>
<dbReference type="GO" id="GO:0016887">
    <property type="term" value="F:ATP hydrolysis activity"/>
    <property type="evidence" value="ECO:0007669"/>
    <property type="project" value="RHEA"/>
</dbReference>
<dbReference type="GO" id="GO:0003684">
    <property type="term" value="F:damaged DNA binding"/>
    <property type="evidence" value="ECO:0007669"/>
    <property type="project" value="InterPro"/>
</dbReference>
<dbReference type="GO" id="GO:0003678">
    <property type="term" value="F:DNA helicase activity"/>
    <property type="evidence" value="ECO:0007669"/>
    <property type="project" value="InterPro"/>
</dbReference>
<dbReference type="GO" id="GO:0070034">
    <property type="term" value="F:telomerase RNA binding"/>
    <property type="evidence" value="ECO:0000314"/>
    <property type="project" value="SGD"/>
</dbReference>
<dbReference type="GO" id="GO:0042162">
    <property type="term" value="F:telomeric DNA binding"/>
    <property type="evidence" value="ECO:0000318"/>
    <property type="project" value="GO_Central"/>
</dbReference>
<dbReference type="GO" id="GO:0006325">
    <property type="term" value="P:chromatin organization"/>
    <property type="evidence" value="ECO:0000314"/>
    <property type="project" value="SGD"/>
</dbReference>
<dbReference type="GO" id="GO:0000727">
    <property type="term" value="P:double-strand break repair via break-induced replication"/>
    <property type="evidence" value="ECO:0000315"/>
    <property type="project" value="SGD"/>
</dbReference>
<dbReference type="GO" id="GO:0000724">
    <property type="term" value="P:double-strand break repair via homologous recombination"/>
    <property type="evidence" value="ECO:0000315"/>
    <property type="project" value="SGD"/>
</dbReference>
<dbReference type="GO" id="GO:0006303">
    <property type="term" value="P:double-strand break repair via nonhomologous end joining"/>
    <property type="evidence" value="ECO:0000315"/>
    <property type="project" value="SGD"/>
</dbReference>
<dbReference type="GO" id="GO:0097695">
    <property type="term" value="P:establishment of protein-containing complex localization to telomere"/>
    <property type="evidence" value="ECO:0000315"/>
    <property type="project" value="SGD"/>
</dbReference>
<dbReference type="GO" id="GO:0097552">
    <property type="term" value="P:mitochondrial double-strand break repair via homologous recombination"/>
    <property type="evidence" value="ECO:0000315"/>
    <property type="project" value="SGD"/>
</dbReference>
<dbReference type="GO" id="GO:0000725">
    <property type="term" value="P:recombinational repair"/>
    <property type="evidence" value="ECO:0000303"/>
    <property type="project" value="ComplexPortal"/>
</dbReference>
<dbReference type="GO" id="GO:0030466">
    <property type="term" value="P:silent mating-type cassette heterochromatin formation"/>
    <property type="evidence" value="ECO:0000315"/>
    <property type="project" value="SGD"/>
</dbReference>
<dbReference type="GO" id="GO:0031509">
    <property type="term" value="P:subtelomeric heterochromatin formation"/>
    <property type="evidence" value="ECO:0000315"/>
    <property type="project" value="SGD"/>
</dbReference>
<dbReference type="GO" id="GO:0000723">
    <property type="term" value="P:telomere maintenance"/>
    <property type="evidence" value="ECO:0000315"/>
    <property type="project" value="SGD"/>
</dbReference>
<dbReference type="CDD" id="cd00788">
    <property type="entry name" value="KU70"/>
    <property type="match status" value="1"/>
</dbReference>
<dbReference type="CDD" id="cd01458">
    <property type="entry name" value="vWA_ku"/>
    <property type="match status" value="1"/>
</dbReference>
<dbReference type="FunFam" id="2.40.290.10:FF:000011">
    <property type="entry name" value="DNA binding protein"/>
    <property type="match status" value="1"/>
</dbReference>
<dbReference type="FunFam" id="3.40.50.410:FF:000099">
    <property type="entry name" value="Yku70p"/>
    <property type="match status" value="1"/>
</dbReference>
<dbReference type="Gene3D" id="1.10.1600.10">
    <property type="match status" value="1"/>
</dbReference>
<dbReference type="Gene3D" id="2.40.290.10">
    <property type="match status" value="1"/>
</dbReference>
<dbReference type="Gene3D" id="3.40.50.410">
    <property type="entry name" value="von Willebrand factor, type A domain"/>
    <property type="match status" value="1"/>
</dbReference>
<dbReference type="InterPro" id="IPR006165">
    <property type="entry name" value="Ku70"/>
</dbReference>
<dbReference type="InterPro" id="IPR006164">
    <property type="entry name" value="Ku70/Ku80_beta-barrel_dom"/>
</dbReference>
<dbReference type="InterPro" id="IPR047087">
    <property type="entry name" value="KU70_core_dom"/>
</dbReference>
<dbReference type="InterPro" id="IPR005160">
    <property type="entry name" value="Ku_C"/>
</dbReference>
<dbReference type="InterPro" id="IPR005161">
    <property type="entry name" value="Ku_N"/>
</dbReference>
<dbReference type="InterPro" id="IPR016194">
    <property type="entry name" value="SPOC-like_C_dom_sf"/>
</dbReference>
<dbReference type="InterPro" id="IPR036465">
    <property type="entry name" value="vWFA_dom_sf"/>
</dbReference>
<dbReference type="PANTHER" id="PTHR12604">
    <property type="entry name" value="KU AUTOANTIGEN DNA HELICASE"/>
    <property type="match status" value="1"/>
</dbReference>
<dbReference type="PANTHER" id="PTHR12604:SF2">
    <property type="entry name" value="X-RAY REPAIR CROSS-COMPLEMENTING PROTEIN 6"/>
    <property type="match status" value="1"/>
</dbReference>
<dbReference type="Pfam" id="PF02735">
    <property type="entry name" value="Ku"/>
    <property type="match status" value="1"/>
</dbReference>
<dbReference type="Pfam" id="PF03730">
    <property type="entry name" value="Ku_C"/>
    <property type="match status" value="1"/>
</dbReference>
<dbReference type="Pfam" id="PF03731">
    <property type="entry name" value="Ku_N"/>
    <property type="match status" value="1"/>
</dbReference>
<dbReference type="PIRSF" id="PIRSF003033">
    <property type="entry name" value="Ku70"/>
    <property type="match status" value="1"/>
</dbReference>
<dbReference type="SMART" id="SM00559">
    <property type="entry name" value="Ku78"/>
    <property type="match status" value="1"/>
</dbReference>
<dbReference type="SUPFAM" id="SSF100939">
    <property type="entry name" value="SPOC domain-like"/>
    <property type="match status" value="1"/>
</dbReference>
<dbReference type="SUPFAM" id="SSF53300">
    <property type="entry name" value="vWA-like"/>
    <property type="match status" value="1"/>
</dbReference>
<keyword id="KW-0002">3D-structure</keyword>
<keyword id="KW-0067">ATP-binding</keyword>
<keyword id="KW-0158">Chromosome</keyword>
<keyword id="KW-0903">Direct protein sequencing</keyword>
<keyword id="KW-0227">DNA damage</keyword>
<keyword id="KW-0233">DNA recombination</keyword>
<keyword id="KW-0234">DNA repair</keyword>
<keyword id="KW-0238">DNA-binding</keyword>
<keyword id="KW-0347">Helicase</keyword>
<keyword id="KW-0378">Hydrolase</keyword>
<keyword id="KW-0547">Nucleotide-binding</keyword>
<keyword id="KW-0539">Nucleus</keyword>
<keyword id="KW-0597">Phosphoprotein</keyword>
<keyword id="KW-1185">Reference proteome</keyword>
<keyword id="KW-0779">Telomere</keyword>
<keyword id="KW-0832">Ubl conjugation</keyword>
<organism>
    <name type="scientific">Saccharomyces cerevisiae (strain ATCC 204508 / S288c)</name>
    <name type="common">Baker's yeast</name>
    <dbReference type="NCBI Taxonomy" id="559292"/>
    <lineage>
        <taxon>Eukaryota</taxon>
        <taxon>Fungi</taxon>
        <taxon>Dikarya</taxon>
        <taxon>Ascomycota</taxon>
        <taxon>Saccharomycotina</taxon>
        <taxon>Saccharomycetes</taxon>
        <taxon>Saccharomycetales</taxon>
        <taxon>Saccharomycetaceae</taxon>
        <taxon>Saccharomyces</taxon>
    </lineage>
</organism>
<name>KU70_YEAST</name>
<protein>
    <recommendedName>
        <fullName>ATP-dependent DNA helicase II subunit 1</fullName>
        <ecNumber>3.6.4.12</ecNumber>
    </recommendedName>
    <alternativeName>
        <fullName>ATP-dependent DNA helicase II subunit Ku70</fullName>
    </alternativeName>
    <alternativeName>
        <fullName>High affinity DNA-binding factor subunit 1</fullName>
    </alternativeName>
</protein>
<feature type="chain" id="PRO_0000210184" description="ATP-dependent DNA helicase II subunit 1">
    <location>
        <begin position="1"/>
        <end position="602"/>
    </location>
</feature>
<feature type="domain" description="Ku">
    <location>
        <begin position="268"/>
        <end position="483"/>
    </location>
</feature>
<feature type="modified residue" description="Phosphoserine" evidence="16">
    <location>
        <position position="370"/>
    </location>
</feature>
<feature type="modified residue" description="Phosphoserine" evidence="16">
    <location>
        <position position="371"/>
    </location>
</feature>
<feature type="modified residue" description="Phosphoserine" evidence="16">
    <location>
        <position position="372"/>
    </location>
</feature>
<feature type="sequence variant" description="In strain: ABYS 60 and SK1.">
    <original>T</original>
    <variation>K</variation>
    <location>
        <position position="21"/>
    </location>
</feature>
<feature type="sequence variant" description="In strain: ABYS 60, DBVPG6044, SK1 and YPS128.">
    <original>E</original>
    <variation>D</variation>
    <location>
        <position position="50"/>
    </location>
</feature>
<feature type="sequence variant" description="In strain: DBVPG6044.">
    <original>T</original>
    <variation>A</variation>
    <location>
        <position position="230"/>
    </location>
</feature>
<feature type="sequence variant" description="In strain: YPS128.">
    <original>F</original>
    <variation>I</variation>
    <location>
        <position position="368"/>
    </location>
</feature>
<feature type="sequence variant" description="In strain: ABYS 60, DBVPG6044, SK1 and YPS128.">
    <original>I</original>
    <variation>T</variation>
    <location>
        <position position="562"/>
    </location>
</feature>
<feature type="sequence conflict" description="In Ref. 1; CAA49840." evidence="15" ref="1">
    <original>S</original>
    <variation>P</variation>
    <location>
        <position position="3"/>
    </location>
</feature>
<feature type="sequence conflict" description="In Ref. 4; AAT92882." evidence="15" ref="4">
    <original>R</original>
    <variation>T</variation>
    <location>
        <position position="87"/>
    </location>
</feature>
<feature type="strand" evidence="17">
    <location>
        <begin position="30"/>
        <end position="37"/>
    </location>
</feature>
<feature type="helix" evidence="17">
    <location>
        <begin position="40"/>
        <end position="43"/>
    </location>
</feature>
<feature type="helix" evidence="17">
    <location>
        <begin position="47"/>
        <end position="49"/>
    </location>
</feature>
<feature type="helix" evidence="17">
    <location>
        <begin position="54"/>
        <end position="72"/>
    </location>
</feature>
<feature type="strand" evidence="17">
    <location>
        <begin position="75"/>
        <end position="84"/>
    </location>
</feature>
<feature type="strand" evidence="17">
    <location>
        <begin position="94"/>
        <end position="102"/>
    </location>
</feature>
<feature type="helix" evidence="17">
    <location>
        <begin position="105"/>
        <end position="119"/>
    </location>
</feature>
<feature type="helix" evidence="17">
    <location>
        <begin position="125"/>
        <end position="129"/>
    </location>
</feature>
<feature type="helix" evidence="17">
    <location>
        <begin position="142"/>
        <end position="152"/>
    </location>
</feature>
<feature type="strand" evidence="17">
    <location>
        <begin position="164"/>
        <end position="172"/>
    </location>
</feature>
<feature type="helix" evidence="17">
    <location>
        <begin position="178"/>
        <end position="180"/>
    </location>
</feature>
<feature type="helix" evidence="17">
    <location>
        <begin position="183"/>
        <end position="198"/>
    </location>
</feature>
<feature type="strand" evidence="17">
    <location>
        <begin position="201"/>
        <end position="209"/>
    </location>
</feature>
<feature type="strand" evidence="17">
    <location>
        <begin position="211"/>
        <end position="213"/>
    </location>
</feature>
<feature type="helix" evidence="17">
    <location>
        <begin position="218"/>
        <end position="224"/>
    </location>
</feature>
<feature type="helix" evidence="17">
    <location>
        <begin position="250"/>
        <end position="252"/>
    </location>
</feature>
<feature type="helix" evidence="17">
    <location>
        <begin position="253"/>
        <end position="260"/>
    </location>
</feature>
<feature type="strand" evidence="17">
    <location>
        <begin position="266"/>
        <end position="275"/>
    </location>
</feature>
<feature type="helix" evidence="17">
    <location>
        <begin position="276"/>
        <end position="278"/>
    </location>
</feature>
<feature type="strand" evidence="17">
    <location>
        <begin position="280"/>
        <end position="290"/>
    </location>
</feature>
<feature type="strand" evidence="17">
    <location>
        <begin position="298"/>
        <end position="305"/>
    </location>
</feature>
<feature type="strand" evidence="17">
    <location>
        <begin position="308"/>
        <end position="319"/>
    </location>
</feature>
<feature type="turn" evidence="17">
    <location>
        <begin position="321"/>
        <end position="323"/>
    </location>
</feature>
<feature type="strand" evidence="17">
    <location>
        <begin position="332"/>
        <end position="336"/>
    </location>
</feature>
<feature type="helix" evidence="17">
    <location>
        <begin position="346"/>
        <end position="354"/>
    </location>
</feature>
<feature type="strand" evidence="17">
    <location>
        <begin position="362"/>
        <end position="370"/>
    </location>
</feature>
<feature type="helix" evidence="17">
    <location>
        <begin position="371"/>
        <end position="373"/>
    </location>
</feature>
<feature type="strand" evidence="17">
    <location>
        <begin position="385"/>
        <end position="389"/>
    </location>
</feature>
<feature type="turn" evidence="17">
    <location>
        <begin position="391"/>
        <end position="393"/>
    </location>
</feature>
<feature type="helix" evidence="17">
    <location>
        <begin position="397"/>
        <end position="410"/>
    </location>
</feature>
<feature type="strand" evidence="17">
    <location>
        <begin position="413"/>
        <end position="425"/>
    </location>
</feature>
<feature type="strand" evidence="17">
    <location>
        <begin position="428"/>
        <end position="434"/>
    </location>
</feature>
<feature type="strand" evidence="17">
    <location>
        <begin position="437"/>
        <end position="441"/>
    </location>
</feature>
<feature type="strand" evidence="17">
    <location>
        <begin position="443"/>
        <end position="449"/>
    </location>
</feature>
<feature type="helix" evidence="17">
    <location>
        <begin position="452"/>
        <end position="454"/>
    </location>
</feature>
<feature type="helix" evidence="17">
    <location>
        <begin position="471"/>
        <end position="486"/>
    </location>
</feature>
<feature type="helix" evidence="17">
    <location>
        <begin position="496"/>
        <end position="498"/>
    </location>
</feature>
<feature type="helix" evidence="17">
    <location>
        <begin position="502"/>
        <end position="515"/>
    </location>
</feature>
<feature type="helix" evidence="17">
    <location>
        <begin position="528"/>
        <end position="538"/>
    </location>
</feature>
<feature type="helix" evidence="17">
    <location>
        <begin position="540"/>
        <end position="557"/>
    </location>
</feature>
<feature type="turn" evidence="17">
    <location>
        <begin position="561"/>
        <end position="564"/>
    </location>
</feature>
<feature type="helix" evidence="17">
    <location>
        <begin position="565"/>
        <end position="583"/>
    </location>
</feature>
<reference key="1">
    <citation type="journal article" date="1993" name="J. Biol. Chem.">
        <title>A putative homologue of the human autoantigen Ku from Saccharomyces cerevisiae.</title>
        <authorList>
            <person name="Feldmann H."/>
            <person name="Winnacker E.L."/>
        </authorList>
    </citation>
    <scope>NUCLEOTIDE SEQUENCE [GENOMIC DNA]</scope>
    <scope>PROTEIN SEQUENCE OF 4-20</scope>
    <scope>SUBUNIT</scope>
    <source>
        <strain>ABYS 60</strain>
    </source>
</reference>
<reference key="2">
    <citation type="journal article" date="1994" name="Yeast">
        <title>Cloning and sequencing of the NES24 gene of Saccharomyces cerevisiae.</title>
        <authorList>
            <person name="Yoshida M."/>
            <person name="Shimma Y."/>
            <person name="Uno I."/>
            <person name="Toh-e A."/>
        </authorList>
    </citation>
    <scope>NUCLEOTIDE SEQUENCE [GENOMIC DNA]</scope>
    <source>
        <strain>ATCC 204508 / S288c</strain>
    </source>
</reference>
<reference key="3">
    <citation type="journal article" date="2006" name="Genetics">
        <title>Sequence diversity, reproductive isolation and species concepts in Saccharomyces.</title>
        <authorList>
            <person name="Liti G."/>
            <person name="Barton D.B."/>
            <person name="Louis E.J."/>
        </authorList>
    </citation>
    <scope>NUCLEOTIDE SEQUENCE [GENOMIC DNA]</scope>
    <source>
        <strain>DBVPG1135</strain>
        <strain>DBVPG1373</strain>
        <strain>DBVPG1378</strain>
        <strain>DBVPG1788</strain>
        <strain>DBVPG1794</strain>
        <strain>DBVPG3051</strain>
        <strain>DBVPG6044</strain>
        <strain>DBVPG6763</strain>
        <strain>DBVPG6765</strain>
        <strain>SK1</strain>
        <strain>Y55</strain>
    </source>
</reference>
<reference key="4">
    <citation type="journal article" date="1997" name="Nature">
        <title>The nucleotide sequence of Saccharomyces cerevisiae chromosome XIII.</title>
        <authorList>
            <person name="Bowman S."/>
            <person name="Churcher C.M."/>
            <person name="Badcock K."/>
            <person name="Brown D."/>
            <person name="Chillingworth T."/>
            <person name="Connor R."/>
            <person name="Dedman K."/>
            <person name="Devlin K."/>
            <person name="Gentles S."/>
            <person name="Hamlin N."/>
            <person name="Hunt S."/>
            <person name="Jagels K."/>
            <person name="Lye G."/>
            <person name="Moule S."/>
            <person name="Odell C."/>
            <person name="Pearson D."/>
            <person name="Rajandream M.A."/>
            <person name="Rice P."/>
            <person name="Skelton J."/>
            <person name="Walsh S.V."/>
            <person name="Whitehead S."/>
            <person name="Barrell B.G."/>
        </authorList>
    </citation>
    <scope>NUCLEOTIDE SEQUENCE [LARGE SCALE GENOMIC DNA]</scope>
    <source>
        <strain>ATCC 204508 / S288c</strain>
    </source>
</reference>
<reference key="5">
    <citation type="journal article" date="2014" name="G3 (Bethesda)">
        <title>The reference genome sequence of Saccharomyces cerevisiae: Then and now.</title>
        <authorList>
            <person name="Engel S.R."/>
            <person name="Dietrich F.S."/>
            <person name="Fisk D.G."/>
            <person name="Binkley G."/>
            <person name="Balakrishnan R."/>
            <person name="Costanzo M.C."/>
            <person name="Dwight S.S."/>
            <person name="Hitz B.C."/>
            <person name="Karra K."/>
            <person name="Nash R.S."/>
            <person name="Weng S."/>
            <person name="Wong E.D."/>
            <person name="Lloyd P."/>
            <person name="Skrzypek M.S."/>
            <person name="Miyasato S.R."/>
            <person name="Simison M."/>
            <person name="Cherry J.M."/>
        </authorList>
    </citation>
    <scope>GENOME REANNOTATION</scope>
    <source>
        <strain>ATCC 204508 / S288c</strain>
    </source>
</reference>
<reference key="6">
    <citation type="journal article" date="2007" name="Genome Res.">
        <title>Approaching a complete repository of sequence-verified protein-encoding clones for Saccharomyces cerevisiae.</title>
        <authorList>
            <person name="Hu Y."/>
            <person name="Rolfs A."/>
            <person name="Bhullar B."/>
            <person name="Murthy T.V.S."/>
            <person name="Zhu C."/>
            <person name="Berger M.F."/>
            <person name="Camargo A.A."/>
            <person name="Kelley F."/>
            <person name="McCarron S."/>
            <person name="Jepson D."/>
            <person name="Richardson A."/>
            <person name="Raphael J."/>
            <person name="Moreira D."/>
            <person name="Taycher E."/>
            <person name="Zuo D."/>
            <person name="Mohr S."/>
            <person name="Kane M.F."/>
            <person name="Williamson J."/>
            <person name="Simpson A.J.G."/>
            <person name="Bulyk M.L."/>
            <person name="Harlow E."/>
            <person name="Marsischky G."/>
            <person name="Kolodner R.D."/>
            <person name="LaBaer J."/>
        </authorList>
    </citation>
    <scope>NUCLEOTIDE SEQUENCE [GENOMIC DNA]</scope>
    <source>
        <strain>ATCC 204508 / S288c</strain>
    </source>
</reference>
<reference key="7">
    <citation type="journal article" date="1996" name="J. Biol. Chem.">
        <title>Involvement of the Saccharomyces cerevisiae HDF1 gene in DNA double-strand break repair and recombination.</title>
        <authorList>
            <person name="Mages G.J."/>
            <person name="Feldmann H.M."/>
            <person name="Winnacker E.-L."/>
        </authorList>
    </citation>
    <scope>FUNCTION IN TELOMERE MAINTENANCE AND MATING-TYPE SWITCHING</scope>
</reference>
<reference key="8">
    <citation type="journal article" date="1996" name="Nucleic Acids Res.">
        <title>Hdf1, a yeast Ku-protein homologue, is involved in illegitimate recombination, but not in homologous recombination.</title>
        <authorList>
            <person name="Tsukamoto Y."/>
            <person name="Kato J."/>
            <person name="Ideka H."/>
        </authorList>
    </citation>
    <scope>FUNCTION</scope>
</reference>
<reference key="9">
    <citation type="journal article" date="1998" name="Chromosoma">
        <title>Telomerase, Ku, and telomeric silencing in Saccharomyces cerevisiae.</title>
        <authorList>
            <person name="Evans S.K."/>
            <person name="Sistrunk M.L."/>
            <person name="Nugent C.I."/>
            <person name="Lundblad V."/>
        </authorList>
    </citation>
    <scope>FUNCTION IN TELOMERIC GENE SILENCING</scope>
</reference>
<reference key="10">
    <citation type="journal article" date="1998" name="Curr. Biol.">
        <title>Mutation of yeast Ku genes disrupts the subnuclear organization of telomeres.</title>
        <authorList>
            <person name="Laroche T."/>
            <person name="Martin S.G."/>
            <person name="Gotta M."/>
            <person name="Gorham H.C."/>
            <person name="Pryde F.E."/>
            <person name="Louis E.J."/>
            <person name="Gasser S.M."/>
        </authorList>
    </citation>
    <scope>FUNCTION IN TELOMERE MAINTENANCE</scope>
    <scope>SUBCELLULAR LOCATION</scope>
</reference>
<reference key="11">
    <citation type="journal article" date="1998" name="Curr. Biol.">
        <title>Telomere maintenance is dependent on activities required for end repair of double-strand breaks.</title>
        <authorList>
            <person name="Nugent C.I."/>
            <person name="Bosco G."/>
            <person name="Ross L.O."/>
            <person name="Evans S.K."/>
            <person name="Salinger A.P."/>
            <person name="Moore J.K."/>
            <person name="Haber J.E."/>
            <person name="Lundblad V."/>
        </authorList>
    </citation>
    <scope>FUNCTION IN DOUBLE-STRAND DNA REPAIR AND TELOMERE MAINTENANCE</scope>
</reference>
<reference key="12">
    <citation type="journal article" date="1998" name="Curr. Biol.">
        <title>The yeast Ku heterodimer is essential for protection of the telomere against nucleolytic and recombinational activities.</title>
        <authorList>
            <person name="Polotnianka R.M."/>
            <person name="Li J."/>
            <person name="Lustig A.J."/>
        </authorList>
    </citation>
    <scope>FUNCTION IN TELOMERE MAINTENANCE</scope>
</reference>
<reference key="13">
    <citation type="journal article" date="2000" name="FEBS Lett.">
        <title>The Saccharomyces cerevisiae DNA damage checkpoint is required for efficient repair of double strand breaks by non-homologous end joining.</title>
        <authorList>
            <person name="de la Torre-Ruiz M."/>
            <person name="Lowndes N.F."/>
        </authorList>
    </citation>
    <scope>FUNCTION IN NON-HOMOLOGOUS END JOINING DNA REPAIR</scope>
</reference>
<reference key="14">
    <citation type="journal article" date="2000" name="Mol. Cell. Biol.">
        <title>Cdc13 cooperates with the yeast Ku proteins and Stn1 to regulate telomerase recruitment.</title>
        <authorList>
            <person name="Grandin N."/>
            <person name="Damon C."/>
            <person name="Charbonneau M."/>
        </authorList>
    </citation>
    <scope>FUNCTION IN TELOMERASE AND CDC13 TELOMERE RECRUITMENT</scope>
</reference>
<reference key="15">
    <citation type="journal article" date="2002" name="Mol. Cell. Biol.">
        <title>Involvement of replicative polymerases, Tel1p, Mec1p, Cdc13p, and the Ku complex in telomere-telomere recombination.</title>
        <authorList>
            <person name="Tsai Y.-L."/>
            <person name="Tseng S.-F."/>
            <person name="Chang S.-H."/>
            <person name="Lin C.-C."/>
            <person name="Teng S.-C."/>
        </authorList>
    </citation>
    <scope>FUNCTION IN TELOMERE RECOMBINATION</scope>
</reference>
<reference key="16">
    <citation type="journal article" date="2003" name="Genes Dev.">
        <title>Ku interacts with telomerase RNA to promote telomere addition at native and broken chromosome ends.</title>
        <authorList>
            <person name="Stellwagen A.E."/>
            <person name="Haimberger Z.W."/>
            <person name="Veatch J.R."/>
            <person name="Gottschling D.E."/>
        </authorList>
    </citation>
    <scope>FUNCTION IN TELOMERIC REPAIR AND BINDING TO TLC1 STEM LOOP</scope>
</reference>
<reference key="17">
    <citation type="journal article" date="2003" name="Mol. Cell. Biol.">
        <title>The Ku heterodimer performs separable activities at double-strand breaks and chromosome termini.</title>
        <authorList>
            <person name="Bertuch A.A."/>
            <person name="Lundblad V."/>
        </authorList>
    </citation>
    <scope>FUNCTION IN DOUBLE-STRAND DNA REPAIR AND TELOMERE MAINTENANCE</scope>
</reference>
<reference key="18">
    <citation type="journal article" date="2003" name="Nature">
        <title>Global analysis of protein expression in yeast.</title>
        <authorList>
            <person name="Ghaemmaghami S."/>
            <person name="Huh W.-K."/>
            <person name="Bower K."/>
            <person name="Howson R.W."/>
            <person name="Belle A."/>
            <person name="Dephoure N."/>
            <person name="O'Shea E.K."/>
            <person name="Weissman J.S."/>
        </authorList>
    </citation>
    <scope>LEVEL OF PROTEIN EXPRESSION [LARGE SCALE ANALYSIS]</scope>
</reference>
<reference key="19">
    <citation type="journal article" date="2005" name="Proc. Natl. Acad. Sci. U.S.A.">
        <title>A SUMO ligase is part of a nuclear multiprotein complex that affects DNA repair and chromosomal organization.</title>
        <authorList>
            <person name="Zhao X."/>
            <person name="Blobel G."/>
        </authorList>
    </citation>
    <scope>SUMOYLATION BY MMS21</scope>
</reference>
<reference key="20">
    <citation type="journal article" date="2007" name="Proc. Natl. Acad. Sci. U.S.A.">
        <title>Analysis of phosphorylation sites on proteins from Saccharomyces cerevisiae by electron transfer dissociation (ETD) mass spectrometry.</title>
        <authorList>
            <person name="Chi A."/>
            <person name="Huttenhower C."/>
            <person name="Geer L.Y."/>
            <person name="Coon J.J."/>
            <person name="Syka J.E.P."/>
            <person name="Bai D.L."/>
            <person name="Shabanowitz J."/>
            <person name="Burke D.J."/>
            <person name="Troyanskaya O.G."/>
            <person name="Hunt D.F."/>
        </authorList>
    </citation>
    <scope>PHOSPHORYLATION [LARGE SCALE ANALYSIS] AT SER-370; SER-371 AND SER-372</scope>
    <scope>IDENTIFICATION BY MASS SPECTROMETRY [LARGE SCALE ANALYSIS]</scope>
</reference>
<gene>
    <name type="primary">YKU70</name>
    <name type="synonym">HDF1</name>
    <name type="synonym">NES24</name>
    <name type="ordered locus">YMR284W</name>
    <name type="ORF">YM8021.10</name>
</gene>
<comment type="function">
    <text evidence="1 2 3 4 6 9 10 11 12 13 14">Single-stranded DNA-dependent ATP-dependent helicase. Involved in non-homologous end joining (NHEJ) DNA double strand break repair. DNA-binding is sequence-independent but has a high affinity to nicks in double-stranded DNA and to the ends of duplex DNA. Binds to naturally occurring chromosomal ends, and therefore provides chromosomal end protection. Appears to have a role in recruitment of telomerase and CDC13 to the telomere and the subsequent telomere elongation. Required also for telomere recombination to repair telomeric ends in the absence of telomerase. KU70, of the KU70/KU80 heterodimer, binds to the stem loop of TLC1, the RNA component of telomerase. Involved in telomere maintenance. Interacts with telomeric repeats and subtelomeric sequences thereby controlling telomere length and protecting against subtelomeric rearrangement. Maintains telomeric chromatin, which is involved in silencing the expression of genes located at the telomere. Required for mating-type switching.</text>
</comment>
<comment type="catalytic activity">
    <reaction>
        <text>ATP + H2O = ADP + phosphate + H(+)</text>
        <dbReference type="Rhea" id="RHEA:13065"/>
        <dbReference type="ChEBI" id="CHEBI:15377"/>
        <dbReference type="ChEBI" id="CHEBI:15378"/>
        <dbReference type="ChEBI" id="CHEBI:30616"/>
        <dbReference type="ChEBI" id="CHEBI:43474"/>
        <dbReference type="ChEBI" id="CHEBI:456216"/>
        <dbReference type="EC" id="3.6.4.12"/>
    </reaction>
</comment>
<comment type="subunit">
    <text evidence="8">Heterodimer of YKU70/HDF1 and YKU80/HDF2.</text>
</comment>
<comment type="interaction">
    <interactant intactId="EBI-8214">
        <id>P32807</id>
    </interactant>
    <interactant intactId="EBI-17490">
        <id>Q12306</id>
        <label>SMT3</label>
    </interactant>
    <organismsDiffer>false</organismsDiffer>
    <experiments>2</experiments>
</comment>
<comment type="interaction">
    <interactant intactId="EBI-8214">
        <id>P32807</id>
    </interactant>
    <interactant intactId="EBI-8224">
        <id>Q04437</id>
        <label>YKU80</label>
    </interactant>
    <organismsDiffer>false</organismsDiffer>
    <experiments>3</experiments>
</comment>
<comment type="subcellular location">
    <subcellularLocation>
        <location evidence="11">Nucleus</location>
    </subcellularLocation>
    <subcellularLocation>
        <location evidence="11">Chromosome</location>
        <location evidence="11">Telomere</location>
    </subcellularLocation>
</comment>
<comment type="PTM">
    <text evidence="7">Sumoylated by MMS21.</text>
</comment>
<comment type="miscellaneous">
    <text evidence="5">Present with 892 molecules/cell in log phase SD medium.</text>
</comment>
<comment type="similarity">
    <text evidence="15">Belongs to the ku70 family.</text>
</comment>